<gene>
    <name evidence="1" type="primary">yacG</name>
    <name type="ordered locus">YPA_2933</name>
</gene>
<reference key="1">
    <citation type="journal article" date="2006" name="J. Bacteriol.">
        <title>Complete genome sequence of Yersinia pestis strains Antiqua and Nepal516: evidence of gene reduction in an emerging pathogen.</title>
        <authorList>
            <person name="Chain P.S.G."/>
            <person name="Hu P."/>
            <person name="Malfatti S.A."/>
            <person name="Radnedge L."/>
            <person name="Larimer F."/>
            <person name="Vergez L.M."/>
            <person name="Worsham P."/>
            <person name="Chu M.C."/>
            <person name="Andersen G.L."/>
        </authorList>
    </citation>
    <scope>NUCLEOTIDE SEQUENCE [LARGE SCALE GENOMIC DNA]</scope>
    <source>
        <strain>Antiqua</strain>
    </source>
</reference>
<organism>
    <name type="scientific">Yersinia pestis bv. Antiqua (strain Antiqua)</name>
    <dbReference type="NCBI Taxonomy" id="360102"/>
    <lineage>
        <taxon>Bacteria</taxon>
        <taxon>Pseudomonadati</taxon>
        <taxon>Pseudomonadota</taxon>
        <taxon>Gammaproteobacteria</taxon>
        <taxon>Enterobacterales</taxon>
        <taxon>Yersiniaceae</taxon>
        <taxon>Yersinia</taxon>
    </lineage>
</organism>
<protein>
    <recommendedName>
        <fullName evidence="1">DNA gyrase inhibitor YacG</fullName>
    </recommendedName>
</protein>
<proteinExistence type="inferred from homology"/>
<sequence>MESEQIQVNCPTCGKVVIWGEQSPFRPFCCKRCQLIDLGEWADEEKRIPSDTELSDSDEWSEEDPLKH</sequence>
<accession>Q1C3S7</accession>
<keyword id="KW-0479">Metal-binding</keyword>
<keyword id="KW-0862">Zinc</keyword>
<dbReference type="EMBL" id="CP000308">
    <property type="protein sequence ID" value="ABG14895.1"/>
    <property type="molecule type" value="Genomic_DNA"/>
</dbReference>
<dbReference type="RefSeq" id="WP_002209317.1">
    <property type="nucleotide sequence ID" value="NZ_CP009906.1"/>
</dbReference>
<dbReference type="SMR" id="Q1C3S7"/>
<dbReference type="GeneID" id="57975278"/>
<dbReference type="KEGG" id="ypa:YPA_2933"/>
<dbReference type="Proteomes" id="UP000001971">
    <property type="component" value="Chromosome"/>
</dbReference>
<dbReference type="GO" id="GO:0008657">
    <property type="term" value="F:DNA topoisomerase type II (double strand cut, ATP-hydrolyzing) inhibitor activity"/>
    <property type="evidence" value="ECO:0007669"/>
    <property type="project" value="UniProtKB-UniRule"/>
</dbReference>
<dbReference type="GO" id="GO:0008270">
    <property type="term" value="F:zinc ion binding"/>
    <property type="evidence" value="ECO:0007669"/>
    <property type="project" value="UniProtKB-UniRule"/>
</dbReference>
<dbReference type="GO" id="GO:0006355">
    <property type="term" value="P:regulation of DNA-templated transcription"/>
    <property type="evidence" value="ECO:0007669"/>
    <property type="project" value="InterPro"/>
</dbReference>
<dbReference type="Gene3D" id="3.30.50.10">
    <property type="entry name" value="Erythroid Transcription Factor GATA-1, subunit A"/>
    <property type="match status" value="1"/>
</dbReference>
<dbReference type="HAMAP" id="MF_00649">
    <property type="entry name" value="DNA_gyrase_inhibitor_YacG"/>
    <property type="match status" value="1"/>
</dbReference>
<dbReference type="InterPro" id="IPR005584">
    <property type="entry name" value="DNA_gyrase_inhibitor_YacG"/>
</dbReference>
<dbReference type="InterPro" id="IPR013088">
    <property type="entry name" value="Znf_NHR/GATA"/>
</dbReference>
<dbReference type="NCBIfam" id="NF001638">
    <property type="entry name" value="PRK00418.1"/>
    <property type="match status" value="1"/>
</dbReference>
<dbReference type="PANTHER" id="PTHR36150">
    <property type="entry name" value="DNA GYRASE INHIBITOR YACG"/>
    <property type="match status" value="1"/>
</dbReference>
<dbReference type="PANTHER" id="PTHR36150:SF1">
    <property type="entry name" value="DNA GYRASE INHIBITOR YACG"/>
    <property type="match status" value="1"/>
</dbReference>
<dbReference type="Pfam" id="PF03884">
    <property type="entry name" value="YacG"/>
    <property type="match status" value="1"/>
</dbReference>
<dbReference type="SUPFAM" id="SSF57716">
    <property type="entry name" value="Glucocorticoid receptor-like (DNA-binding domain)"/>
    <property type="match status" value="1"/>
</dbReference>
<feature type="chain" id="PRO_1000057005" description="DNA gyrase inhibitor YacG">
    <location>
        <begin position="1"/>
        <end position="68"/>
    </location>
</feature>
<feature type="region of interest" description="Disordered" evidence="2">
    <location>
        <begin position="45"/>
        <end position="68"/>
    </location>
</feature>
<feature type="compositionally biased region" description="Acidic residues" evidence="2">
    <location>
        <begin position="53"/>
        <end position="68"/>
    </location>
</feature>
<feature type="binding site" evidence="1">
    <location>
        <position position="10"/>
    </location>
    <ligand>
        <name>Zn(2+)</name>
        <dbReference type="ChEBI" id="CHEBI:29105"/>
    </ligand>
</feature>
<feature type="binding site" evidence="1">
    <location>
        <position position="13"/>
    </location>
    <ligand>
        <name>Zn(2+)</name>
        <dbReference type="ChEBI" id="CHEBI:29105"/>
    </ligand>
</feature>
<feature type="binding site" evidence="1">
    <location>
        <position position="29"/>
    </location>
    <ligand>
        <name>Zn(2+)</name>
        <dbReference type="ChEBI" id="CHEBI:29105"/>
    </ligand>
</feature>
<feature type="binding site" evidence="1">
    <location>
        <position position="33"/>
    </location>
    <ligand>
        <name>Zn(2+)</name>
        <dbReference type="ChEBI" id="CHEBI:29105"/>
    </ligand>
</feature>
<name>YACG_YERPA</name>
<comment type="function">
    <text evidence="1">Inhibits all the catalytic activities of DNA gyrase by preventing its interaction with DNA. Acts by binding directly to the C-terminal domain of GyrB, which probably disrupts DNA binding by the gyrase.</text>
</comment>
<comment type="cofactor">
    <cofactor evidence="1">
        <name>Zn(2+)</name>
        <dbReference type="ChEBI" id="CHEBI:29105"/>
    </cofactor>
    <text evidence="1">Binds 1 zinc ion.</text>
</comment>
<comment type="subunit">
    <text evidence="1">Interacts with GyrB.</text>
</comment>
<comment type="similarity">
    <text evidence="1">Belongs to the DNA gyrase inhibitor YacG family.</text>
</comment>
<evidence type="ECO:0000255" key="1">
    <source>
        <dbReference type="HAMAP-Rule" id="MF_00649"/>
    </source>
</evidence>
<evidence type="ECO:0000256" key="2">
    <source>
        <dbReference type="SAM" id="MobiDB-lite"/>
    </source>
</evidence>